<evidence type="ECO:0000255" key="1">
    <source>
        <dbReference type="HAMAP-Rule" id="MF_00168"/>
    </source>
</evidence>
<feature type="chain" id="PRO_0000135514" description="Queuine tRNA-ribosyltransferase">
    <location>
        <begin position="1"/>
        <end position="361"/>
    </location>
</feature>
<feature type="region of interest" description="RNA binding" evidence="1">
    <location>
        <begin position="247"/>
        <end position="253"/>
    </location>
</feature>
<feature type="region of interest" description="RNA binding; important for wobble base 34 recognition" evidence="1">
    <location>
        <begin position="271"/>
        <end position="275"/>
    </location>
</feature>
<feature type="active site" description="Proton acceptor" evidence="1">
    <location>
        <position position="92"/>
    </location>
</feature>
<feature type="active site" description="Nucleophile" evidence="1">
    <location>
        <position position="266"/>
    </location>
</feature>
<feature type="binding site" evidence="1">
    <location>
        <begin position="92"/>
        <end position="96"/>
    </location>
    <ligand>
        <name>substrate</name>
    </ligand>
</feature>
<feature type="binding site" evidence="1">
    <location>
        <position position="146"/>
    </location>
    <ligand>
        <name>substrate</name>
    </ligand>
</feature>
<feature type="binding site" evidence="1">
    <location>
        <position position="189"/>
    </location>
    <ligand>
        <name>substrate</name>
    </ligand>
</feature>
<feature type="binding site" evidence="1">
    <location>
        <position position="216"/>
    </location>
    <ligand>
        <name>substrate</name>
    </ligand>
</feature>
<feature type="binding site" evidence="1">
    <location>
        <position position="304"/>
    </location>
    <ligand>
        <name>Zn(2+)</name>
        <dbReference type="ChEBI" id="CHEBI:29105"/>
    </ligand>
</feature>
<feature type="binding site" evidence="1">
    <location>
        <position position="306"/>
    </location>
    <ligand>
        <name>Zn(2+)</name>
        <dbReference type="ChEBI" id="CHEBI:29105"/>
    </ligand>
</feature>
<feature type="binding site" evidence="1">
    <location>
        <position position="309"/>
    </location>
    <ligand>
        <name>Zn(2+)</name>
        <dbReference type="ChEBI" id="CHEBI:29105"/>
    </ligand>
</feature>
<feature type="binding site" evidence="1">
    <location>
        <position position="335"/>
    </location>
    <ligand>
        <name>Zn(2+)</name>
        <dbReference type="ChEBI" id="CHEBI:29105"/>
    </ligand>
</feature>
<reference key="1">
    <citation type="journal article" date="1998" name="Nature">
        <title>The genome sequence of Rickettsia prowazekii and the origin of mitochondria.</title>
        <authorList>
            <person name="Andersson S.G.E."/>
            <person name="Zomorodipour A."/>
            <person name="Andersson J.O."/>
            <person name="Sicheritz-Ponten T."/>
            <person name="Alsmark U.C.M."/>
            <person name="Podowski R.M."/>
            <person name="Naeslund A.K."/>
            <person name="Eriksson A.-S."/>
            <person name="Winkler H.H."/>
            <person name="Kurland C.G."/>
        </authorList>
    </citation>
    <scope>NUCLEOTIDE SEQUENCE [LARGE SCALE GENOMIC DNA]</scope>
    <source>
        <strain>Madrid E</strain>
    </source>
</reference>
<sequence length="361" mass="40785">MSKFSFTIHSHYKKARSGVITTAHGEIRTPAFMPVGTRGAVKAMLTEAVVETGADILLGNTYHLMLQPSAERIAYLGGLHKFMNWDKPILTDSGGFQVMSLSKLCKITEEGVSFRSHINGNKYMLTPEYSTEIQYLLGSTITMALDECTPYPSTFEKAKTSMHLTTRWANRSRDAFVKREGYAQFGIIQGSVYKELREQSVKDLVKCDFEGYAIGGLAVGEGQELMFRVLDYVPDFLPQNKPRYLMGVGKPSDIIGAVSRGIDMFDCVIPTRSGRNGQAFTKYGTVNIRNSKYADDKEPLEHDCKCPACTNYTKAYLHHLVRIREILGPMLMTWHNLTYFQNLMSRIRTYIKLGKDFDFVH</sequence>
<accession>Q9ZCK8</accession>
<comment type="function">
    <text evidence="1">Catalyzes the base-exchange of a guanine (G) residue with the queuine precursor 7-aminomethyl-7-deazaguanine (PreQ1) at position 34 (anticodon wobble position) in tRNAs with GU(N) anticodons (tRNA-Asp, -Asn, -His and -Tyr). Catalysis occurs through a double-displacement mechanism. The nucleophile active site attacks the C1' of nucleotide 34 to detach the guanine base from the RNA, forming a covalent enzyme-RNA intermediate. The proton acceptor active site deprotonates the incoming PreQ1, allowing a nucleophilic attack on the C1' of the ribose to form the product. After dissociation, two additional enzymatic reactions on the tRNA convert PreQ1 to queuine (Q), resulting in the hypermodified nucleoside queuosine (7-(((4,5-cis-dihydroxy-2-cyclopenten-1-yl)amino)methyl)-7-deazaguanosine).</text>
</comment>
<comment type="catalytic activity">
    <reaction evidence="1">
        <text>7-aminomethyl-7-carbaguanine + guanosine(34) in tRNA = 7-aminomethyl-7-carbaguanosine(34) in tRNA + guanine</text>
        <dbReference type="Rhea" id="RHEA:24104"/>
        <dbReference type="Rhea" id="RHEA-COMP:10341"/>
        <dbReference type="Rhea" id="RHEA-COMP:10342"/>
        <dbReference type="ChEBI" id="CHEBI:16235"/>
        <dbReference type="ChEBI" id="CHEBI:58703"/>
        <dbReference type="ChEBI" id="CHEBI:74269"/>
        <dbReference type="ChEBI" id="CHEBI:82833"/>
        <dbReference type="EC" id="2.4.2.29"/>
    </reaction>
</comment>
<comment type="cofactor">
    <cofactor evidence="1">
        <name>Zn(2+)</name>
        <dbReference type="ChEBI" id="CHEBI:29105"/>
    </cofactor>
    <text evidence="1">Binds 1 zinc ion per subunit.</text>
</comment>
<comment type="pathway">
    <text evidence="1">tRNA modification; tRNA-queuosine biosynthesis.</text>
</comment>
<comment type="subunit">
    <text evidence="1">Homodimer. Within each dimer, one monomer is responsible for RNA recognition and catalysis, while the other monomer binds to the replacement base PreQ1.</text>
</comment>
<comment type="similarity">
    <text evidence="1">Belongs to the queuine tRNA-ribosyltransferase family.</text>
</comment>
<organism>
    <name type="scientific">Rickettsia prowazekii (strain Madrid E)</name>
    <dbReference type="NCBI Taxonomy" id="272947"/>
    <lineage>
        <taxon>Bacteria</taxon>
        <taxon>Pseudomonadati</taxon>
        <taxon>Pseudomonadota</taxon>
        <taxon>Alphaproteobacteria</taxon>
        <taxon>Rickettsiales</taxon>
        <taxon>Rickettsiaceae</taxon>
        <taxon>Rickettsieae</taxon>
        <taxon>Rickettsia</taxon>
        <taxon>typhus group</taxon>
    </lineage>
</organism>
<keyword id="KW-0328">Glycosyltransferase</keyword>
<keyword id="KW-0479">Metal-binding</keyword>
<keyword id="KW-0671">Queuosine biosynthesis</keyword>
<keyword id="KW-1185">Reference proteome</keyword>
<keyword id="KW-0808">Transferase</keyword>
<keyword id="KW-0819">tRNA processing</keyword>
<keyword id="KW-0862">Zinc</keyword>
<name>TGT_RICPR</name>
<proteinExistence type="inferred from homology"/>
<gene>
    <name evidence="1" type="primary">tgt</name>
    <name type="ordered locus">RP721</name>
</gene>
<dbReference type="EC" id="2.4.2.29" evidence="1"/>
<dbReference type="EMBL" id="AJ235273">
    <property type="protein sequence ID" value="CAA15152.1"/>
    <property type="molecule type" value="Genomic_DNA"/>
</dbReference>
<dbReference type="PIR" id="H71631">
    <property type="entry name" value="H71631"/>
</dbReference>
<dbReference type="RefSeq" id="NP_221076.1">
    <property type="nucleotide sequence ID" value="NC_000963.1"/>
</dbReference>
<dbReference type="RefSeq" id="WP_010886359.1">
    <property type="nucleotide sequence ID" value="NC_000963.1"/>
</dbReference>
<dbReference type="SMR" id="Q9ZCK8"/>
<dbReference type="STRING" id="272947.gene:17555793"/>
<dbReference type="EnsemblBacteria" id="CAA15152">
    <property type="protein sequence ID" value="CAA15152"/>
    <property type="gene ID" value="CAA15152"/>
</dbReference>
<dbReference type="GeneID" id="57569844"/>
<dbReference type="KEGG" id="rpr:RP721"/>
<dbReference type="PATRIC" id="fig|272947.5.peg.756"/>
<dbReference type="eggNOG" id="COG0343">
    <property type="taxonomic scope" value="Bacteria"/>
</dbReference>
<dbReference type="HOGENOM" id="CLU_022060_0_1_5"/>
<dbReference type="OrthoDB" id="9805417at2"/>
<dbReference type="UniPathway" id="UPA00392"/>
<dbReference type="Proteomes" id="UP000002480">
    <property type="component" value="Chromosome"/>
</dbReference>
<dbReference type="GO" id="GO:0005737">
    <property type="term" value="C:cytoplasm"/>
    <property type="evidence" value="ECO:0007669"/>
    <property type="project" value="TreeGrafter"/>
</dbReference>
<dbReference type="GO" id="GO:0046872">
    <property type="term" value="F:metal ion binding"/>
    <property type="evidence" value="ECO:0007669"/>
    <property type="project" value="UniProtKB-KW"/>
</dbReference>
<dbReference type="GO" id="GO:0008479">
    <property type="term" value="F:tRNA-guanosine(34) queuine transglycosylase activity"/>
    <property type="evidence" value="ECO:0007669"/>
    <property type="project" value="UniProtKB-UniRule"/>
</dbReference>
<dbReference type="GO" id="GO:0008616">
    <property type="term" value="P:queuosine biosynthetic process"/>
    <property type="evidence" value="ECO:0007669"/>
    <property type="project" value="UniProtKB-UniRule"/>
</dbReference>
<dbReference type="GO" id="GO:0002099">
    <property type="term" value="P:tRNA wobble guanine modification"/>
    <property type="evidence" value="ECO:0007669"/>
    <property type="project" value="TreeGrafter"/>
</dbReference>
<dbReference type="GO" id="GO:0101030">
    <property type="term" value="P:tRNA-guanine transglycosylation"/>
    <property type="evidence" value="ECO:0007669"/>
    <property type="project" value="InterPro"/>
</dbReference>
<dbReference type="FunFam" id="3.20.20.105:FF:000001">
    <property type="entry name" value="Queuine tRNA-ribosyltransferase"/>
    <property type="match status" value="1"/>
</dbReference>
<dbReference type="Gene3D" id="3.20.20.105">
    <property type="entry name" value="Queuine tRNA-ribosyltransferase-like"/>
    <property type="match status" value="1"/>
</dbReference>
<dbReference type="HAMAP" id="MF_00168">
    <property type="entry name" value="Q_tRNA_Tgt"/>
    <property type="match status" value="1"/>
</dbReference>
<dbReference type="InterPro" id="IPR050076">
    <property type="entry name" value="ArchSynthase1/Queuine_TRR"/>
</dbReference>
<dbReference type="InterPro" id="IPR004803">
    <property type="entry name" value="TGT"/>
</dbReference>
<dbReference type="InterPro" id="IPR036511">
    <property type="entry name" value="TGT-like_sf"/>
</dbReference>
<dbReference type="InterPro" id="IPR002616">
    <property type="entry name" value="tRNA_ribo_trans-like"/>
</dbReference>
<dbReference type="NCBIfam" id="TIGR00430">
    <property type="entry name" value="Q_tRNA_tgt"/>
    <property type="match status" value="1"/>
</dbReference>
<dbReference type="NCBIfam" id="TIGR00449">
    <property type="entry name" value="tgt_general"/>
    <property type="match status" value="1"/>
</dbReference>
<dbReference type="PANTHER" id="PTHR46499">
    <property type="entry name" value="QUEUINE TRNA-RIBOSYLTRANSFERASE"/>
    <property type="match status" value="1"/>
</dbReference>
<dbReference type="PANTHER" id="PTHR46499:SF1">
    <property type="entry name" value="QUEUINE TRNA-RIBOSYLTRANSFERASE"/>
    <property type="match status" value="1"/>
</dbReference>
<dbReference type="Pfam" id="PF01702">
    <property type="entry name" value="TGT"/>
    <property type="match status" value="1"/>
</dbReference>
<dbReference type="SUPFAM" id="SSF51713">
    <property type="entry name" value="tRNA-guanine transglycosylase"/>
    <property type="match status" value="1"/>
</dbReference>
<protein>
    <recommendedName>
        <fullName evidence="1">Queuine tRNA-ribosyltransferase</fullName>
        <ecNumber evidence="1">2.4.2.29</ecNumber>
    </recommendedName>
    <alternativeName>
        <fullName evidence="1">Guanine insertion enzyme</fullName>
    </alternativeName>
    <alternativeName>
        <fullName evidence="1">tRNA-guanine transglycosylase</fullName>
    </alternativeName>
</protein>